<evidence type="ECO:0000255" key="1">
    <source>
        <dbReference type="HAMAP-Rule" id="MF_00046"/>
    </source>
</evidence>
<proteinExistence type="inferred from homology"/>
<reference key="1">
    <citation type="submission" date="2008-05" db="EMBL/GenBank/DDBJ databases">
        <title>Complete sequence of Shigella boydii serotype 18 strain BS512.</title>
        <authorList>
            <person name="Rasko D.A."/>
            <person name="Rosovitz M."/>
            <person name="Maurelli A.T."/>
            <person name="Myers G."/>
            <person name="Seshadri R."/>
            <person name="Cer R."/>
            <person name="Jiang L."/>
            <person name="Ravel J."/>
            <person name="Sebastian Y."/>
        </authorList>
    </citation>
    <scope>NUCLEOTIDE SEQUENCE [LARGE SCALE GENOMIC DNA]</scope>
    <source>
        <strain>CDC 3083-94 / BS512</strain>
    </source>
</reference>
<organism>
    <name type="scientific">Shigella boydii serotype 18 (strain CDC 3083-94 / BS512)</name>
    <dbReference type="NCBI Taxonomy" id="344609"/>
    <lineage>
        <taxon>Bacteria</taxon>
        <taxon>Pseudomonadati</taxon>
        <taxon>Pseudomonadota</taxon>
        <taxon>Gammaproteobacteria</taxon>
        <taxon>Enterobacterales</taxon>
        <taxon>Enterobacteriaceae</taxon>
        <taxon>Shigella</taxon>
    </lineage>
</organism>
<keyword id="KW-0067">ATP-binding</keyword>
<keyword id="KW-0131">Cell cycle</keyword>
<keyword id="KW-0132">Cell division</keyword>
<keyword id="KW-0133">Cell shape</keyword>
<keyword id="KW-0961">Cell wall biogenesis/degradation</keyword>
<keyword id="KW-0963">Cytoplasm</keyword>
<keyword id="KW-0436">Ligase</keyword>
<keyword id="KW-0547">Nucleotide-binding</keyword>
<keyword id="KW-0573">Peptidoglycan synthesis</keyword>
<keyword id="KW-1185">Reference proteome</keyword>
<comment type="function">
    <text evidence="1">Cell wall formation.</text>
</comment>
<comment type="catalytic activity">
    <reaction evidence="1">
        <text>UDP-N-acetyl-alpha-D-muramate + L-alanine + ATP = UDP-N-acetyl-alpha-D-muramoyl-L-alanine + ADP + phosphate + H(+)</text>
        <dbReference type="Rhea" id="RHEA:23372"/>
        <dbReference type="ChEBI" id="CHEBI:15378"/>
        <dbReference type="ChEBI" id="CHEBI:30616"/>
        <dbReference type="ChEBI" id="CHEBI:43474"/>
        <dbReference type="ChEBI" id="CHEBI:57972"/>
        <dbReference type="ChEBI" id="CHEBI:70757"/>
        <dbReference type="ChEBI" id="CHEBI:83898"/>
        <dbReference type="ChEBI" id="CHEBI:456216"/>
        <dbReference type="EC" id="6.3.2.8"/>
    </reaction>
</comment>
<comment type="pathway">
    <text evidence="1">Cell wall biogenesis; peptidoglycan biosynthesis.</text>
</comment>
<comment type="subcellular location">
    <subcellularLocation>
        <location evidence="1">Cytoplasm</location>
    </subcellularLocation>
</comment>
<comment type="similarity">
    <text evidence="1">Belongs to the MurCDEF family.</text>
</comment>
<protein>
    <recommendedName>
        <fullName evidence="1">UDP-N-acetylmuramate--L-alanine ligase</fullName>
        <ecNumber evidence="1">6.3.2.8</ecNumber>
    </recommendedName>
    <alternativeName>
        <fullName evidence="1">UDP-N-acetylmuramoyl-L-alanine synthetase</fullName>
    </alternativeName>
</protein>
<feature type="chain" id="PRO_1000091137" description="UDP-N-acetylmuramate--L-alanine ligase">
    <location>
        <begin position="1"/>
        <end position="491"/>
    </location>
</feature>
<feature type="binding site" evidence="1">
    <location>
        <begin position="126"/>
        <end position="132"/>
    </location>
    <ligand>
        <name>ATP</name>
        <dbReference type="ChEBI" id="CHEBI:30616"/>
    </ligand>
</feature>
<dbReference type="EC" id="6.3.2.8" evidence="1"/>
<dbReference type="EMBL" id="CP001063">
    <property type="protein sequence ID" value="ACD06935.1"/>
    <property type="molecule type" value="Genomic_DNA"/>
</dbReference>
<dbReference type="RefSeq" id="WP_001096043.1">
    <property type="nucleotide sequence ID" value="NC_010658.1"/>
</dbReference>
<dbReference type="SMR" id="B2U296"/>
<dbReference type="STRING" id="344609.SbBS512_E0084"/>
<dbReference type="KEGG" id="sbc:SbBS512_E0084"/>
<dbReference type="HOGENOM" id="CLU_028104_2_2_6"/>
<dbReference type="UniPathway" id="UPA00219"/>
<dbReference type="Proteomes" id="UP000001030">
    <property type="component" value="Chromosome"/>
</dbReference>
<dbReference type="GO" id="GO:0005737">
    <property type="term" value="C:cytoplasm"/>
    <property type="evidence" value="ECO:0007669"/>
    <property type="project" value="UniProtKB-SubCell"/>
</dbReference>
<dbReference type="GO" id="GO:0005524">
    <property type="term" value="F:ATP binding"/>
    <property type="evidence" value="ECO:0007669"/>
    <property type="project" value="UniProtKB-UniRule"/>
</dbReference>
<dbReference type="GO" id="GO:0008763">
    <property type="term" value="F:UDP-N-acetylmuramate-L-alanine ligase activity"/>
    <property type="evidence" value="ECO:0007669"/>
    <property type="project" value="UniProtKB-UniRule"/>
</dbReference>
<dbReference type="GO" id="GO:0051301">
    <property type="term" value="P:cell division"/>
    <property type="evidence" value="ECO:0007669"/>
    <property type="project" value="UniProtKB-KW"/>
</dbReference>
<dbReference type="GO" id="GO:0071555">
    <property type="term" value="P:cell wall organization"/>
    <property type="evidence" value="ECO:0007669"/>
    <property type="project" value="UniProtKB-KW"/>
</dbReference>
<dbReference type="GO" id="GO:0009252">
    <property type="term" value="P:peptidoglycan biosynthetic process"/>
    <property type="evidence" value="ECO:0007669"/>
    <property type="project" value="UniProtKB-UniRule"/>
</dbReference>
<dbReference type="GO" id="GO:0008360">
    <property type="term" value="P:regulation of cell shape"/>
    <property type="evidence" value="ECO:0007669"/>
    <property type="project" value="UniProtKB-KW"/>
</dbReference>
<dbReference type="FunFam" id="3.40.1190.10:FF:000001">
    <property type="entry name" value="UDP-N-acetylmuramate--L-alanine ligase"/>
    <property type="match status" value="1"/>
</dbReference>
<dbReference type="FunFam" id="3.40.50.720:FF:000046">
    <property type="entry name" value="UDP-N-acetylmuramate--L-alanine ligase"/>
    <property type="match status" value="1"/>
</dbReference>
<dbReference type="FunFam" id="3.90.190.20:FF:000001">
    <property type="entry name" value="UDP-N-acetylmuramate--L-alanine ligase"/>
    <property type="match status" value="1"/>
</dbReference>
<dbReference type="Gene3D" id="3.90.190.20">
    <property type="entry name" value="Mur ligase, C-terminal domain"/>
    <property type="match status" value="1"/>
</dbReference>
<dbReference type="Gene3D" id="3.40.1190.10">
    <property type="entry name" value="Mur-like, catalytic domain"/>
    <property type="match status" value="1"/>
</dbReference>
<dbReference type="Gene3D" id="3.40.50.720">
    <property type="entry name" value="NAD(P)-binding Rossmann-like Domain"/>
    <property type="match status" value="1"/>
</dbReference>
<dbReference type="HAMAP" id="MF_00046">
    <property type="entry name" value="MurC"/>
    <property type="match status" value="1"/>
</dbReference>
<dbReference type="InterPro" id="IPR036565">
    <property type="entry name" value="Mur-like_cat_sf"/>
</dbReference>
<dbReference type="InterPro" id="IPR004101">
    <property type="entry name" value="Mur_ligase_C"/>
</dbReference>
<dbReference type="InterPro" id="IPR036615">
    <property type="entry name" value="Mur_ligase_C_dom_sf"/>
</dbReference>
<dbReference type="InterPro" id="IPR013221">
    <property type="entry name" value="Mur_ligase_cen"/>
</dbReference>
<dbReference type="InterPro" id="IPR000713">
    <property type="entry name" value="Mur_ligase_N"/>
</dbReference>
<dbReference type="InterPro" id="IPR050061">
    <property type="entry name" value="MurCDEF_pg_biosynth"/>
</dbReference>
<dbReference type="InterPro" id="IPR005758">
    <property type="entry name" value="UDP-N-AcMur_Ala_ligase_MurC"/>
</dbReference>
<dbReference type="NCBIfam" id="TIGR01082">
    <property type="entry name" value="murC"/>
    <property type="match status" value="1"/>
</dbReference>
<dbReference type="PANTHER" id="PTHR43445:SF3">
    <property type="entry name" value="UDP-N-ACETYLMURAMATE--L-ALANINE LIGASE"/>
    <property type="match status" value="1"/>
</dbReference>
<dbReference type="PANTHER" id="PTHR43445">
    <property type="entry name" value="UDP-N-ACETYLMURAMATE--L-ALANINE LIGASE-RELATED"/>
    <property type="match status" value="1"/>
</dbReference>
<dbReference type="Pfam" id="PF01225">
    <property type="entry name" value="Mur_ligase"/>
    <property type="match status" value="1"/>
</dbReference>
<dbReference type="Pfam" id="PF02875">
    <property type="entry name" value="Mur_ligase_C"/>
    <property type="match status" value="1"/>
</dbReference>
<dbReference type="Pfam" id="PF08245">
    <property type="entry name" value="Mur_ligase_M"/>
    <property type="match status" value="1"/>
</dbReference>
<dbReference type="SUPFAM" id="SSF51984">
    <property type="entry name" value="MurCD N-terminal domain"/>
    <property type="match status" value="1"/>
</dbReference>
<dbReference type="SUPFAM" id="SSF53623">
    <property type="entry name" value="MurD-like peptide ligases, catalytic domain"/>
    <property type="match status" value="1"/>
</dbReference>
<dbReference type="SUPFAM" id="SSF53244">
    <property type="entry name" value="MurD-like peptide ligases, peptide-binding domain"/>
    <property type="match status" value="1"/>
</dbReference>
<gene>
    <name evidence="1" type="primary">murC</name>
    <name type="ordered locus">SbBS512_E0084</name>
</gene>
<sequence length="491" mass="53583">MNTQQLAKLRSIVPEMRRVRHIHFVGIGGAGMGGIAEVLANEGYQISGSDLAPNPVTQQLMNLGATIYFNHRPENVRDASVVVVSSAISADNPEIVAAHEARIPVIRRAEMLAELMRFRHGIAIAGTHGKTTTTAMVSSIYAEAGLDPTFVNGGLVKAAGVHARLGHGRYLIAEADESDASFLHLQPMVAIVTNIEADHMDTYQGDFENLKQTFINFLHNLPFYGRAVMCVDDPVIRELLPRVGRQTTTYGFSEDADVRVEDYQQIGPQGHFTLLRQDKEPMRVTLNAPGRHNALNAAAAVAVATEEGIDDEAILRALESFLGTGRRFDFLGEFPLEPVNGKSGTAMLVDDYGHHPTEVDATIKAARAGWPDKNLVMLFQPHRFTRTRDLYDDFANVLTQVDTLLMLEVYPAGEAPIPGADSRSLCRTIRGRGKIDPILVPDPAQVAEMLAPVLTGNDLILVQGAGNIGKIARSLAEIKLKPQTPEEEQHD</sequence>
<name>MURC_SHIB3</name>
<accession>B2U296</accession>